<dbReference type="EC" id="2.4.2.7" evidence="1"/>
<dbReference type="EMBL" id="CP000868">
    <property type="protein sequence ID" value="ABX14226.1"/>
    <property type="molecule type" value="Genomic_DNA"/>
</dbReference>
<dbReference type="EMBL" id="AP009385">
    <property type="protein sequence ID" value="BAG44617.1"/>
    <property type="molecule type" value="Genomic_DNA"/>
</dbReference>
<dbReference type="RefSeq" id="WP_012212706.1">
    <property type="nucleotide sequence ID" value="NC_010804.1"/>
</dbReference>
<dbReference type="SMR" id="A9AF06"/>
<dbReference type="STRING" id="395019.BMULJ_02728"/>
<dbReference type="KEGG" id="bmj:BMULJ_02728"/>
<dbReference type="KEGG" id="bmu:Bmul_0531"/>
<dbReference type="eggNOG" id="COG0503">
    <property type="taxonomic scope" value="Bacteria"/>
</dbReference>
<dbReference type="HOGENOM" id="CLU_063339_3_0_4"/>
<dbReference type="UniPathway" id="UPA00588">
    <property type="reaction ID" value="UER00646"/>
</dbReference>
<dbReference type="Proteomes" id="UP000008815">
    <property type="component" value="Chromosome 1"/>
</dbReference>
<dbReference type="GO" id="GO:0005737">
    <property type="term" value="C:cytoplasm"/>
    <property type="evidence" value="ECO:0007669"/>
    <property type="project" value="UniProtKB-SubCell"/>
</dbReference>
<dbReference type="GO" id="GO:0003999">
    <property type="term" value="F:adenine phosphoribosyltransferase activity"/>
    <property type="evidence" value="ECO:0007669"/>
    <property type="project" value="UniProtKB-UniRule"/>
</dbReference>
<dbReference type="GO" id="GO:0006168">
    <property type="term" value="P:adenine salvage"/>
    <property type="evidence" value="ECO:0007669"/>
    <property type="project" value="InterPro"/>
</dbReference>
<dbReference type="GO" id="GO:0044209">
    <property type="term" value="P:AMP salvage"/>
    <property type="evidence" value="ECO:0007669"/>
    <property type="project" value="UniProtKB-UniRule"/>
</dbReference>
<dbReference type="GO" id="GO:0006166">
    <property type="term" value="P:purine ribonucleoside salvage"/>
    <property type="evidence" value="ECO:0007669"/>
    <property type="project" value="UniProtKB-KW"/>
</dbReference>
<dbReference type="CDD" id="cd06223">
    <property type="entry name" value="PRTases_typeI"/>
    <property type="match status" value="1"/>
</dbReference>
<dbReference type="FunFam" id="3.40.50.2020:FF:000021">
    <property type="entry name" value="Adenine phosphoribosyltransferase"/>
    <property type="match status" value="1"/>
</dbReference>
<dbReference type="Gene3D" id="3.40.50.2020">
    <property type="match status" value="1"/>
</dbReference>
<dbReference type="HAMAP" id="MF_00004">
    <property type="entry name" value="Aden_phosphoribosyltr"/>
    <property type="match status" value="1"/>
</dbReference>
<dbReference type="InterPro" id="IPR005764">
    <property type="entry name" value="Ade_phspho_trans"/>
</dbReference>
<dbReference type="InterPro" id="IPR050120">
    <property type="entry name" value="Adenine_PRTase"/>
</dbReference>
<dbReference type="InterPro" id="IPR000836">
    <property type="entry name" value="PRibTrfase_dom"/>
</dbReference>
<dbReference type="InterPro" id="IPR029057">
    <property type="entry name" value="PRTase-like"/>
</dbReference>
<dbReference type="NCBIfam" id="TIGR01090">
    <property type="entry name" value="apt"/>
    <property type="match status" value="1"/>
</dbReference>
<dbReference type="NCBIfam" id="NF002634">
    <property type="entry name" value="PRK02304.1-3"/>
    <property type="match status" value="1"/>
</dbReference>
<dbReference type="NCBIfam" id="NF002636">
    <property type="entry name" value="PRK02304.1-5"/>
    <property type="match status" value="1"/>
</dbReference>
<dbReference type="PANTHER" id="PTHR11776">
    <property type="entry name" value="ADENINE PHOSPHORIBOSYLTRANSFERASE"/>
    <property type="match status" value="1"/>
</dbReference>
<dbReference type="PANTHER" id="PTHR11776:SF7">
    <property type="entry name" value="PHOSPHORIBOSYLTRANSFERASE DOMAIN-CONTAINING PROTEIN"/>
    <property type="match status" value="1"/>
</dbReference>
<dbReference type="Pfam" id="PF00156">
    <property type="entry name" value="Pribosyltran"/>
    <property type="match status" value="1"/>
</dbReference>
<dbReference type="SUPFAM" id="SSF53271">
    <property type="entry name" value="PRTase-like"/>
    <property type="match status" value="1"/>
</dbReference>
<dbReference type="PROSITE" id="PS00103">
    <property type="entry name" value="PUR_PYR_PR_TRANSFER"/>
    <property type="match status" value="1"/>
</dbReference>
<reference key="1">
    <citation type="submission" date="2007-10" db="EMBL/GenBank/DDBJ databases">
        <title>Complete sequence of chromosome 1 of Burkholderia multivorans ATCC 17616.</title>
        <authorList>
            <person name="Copeland A."/>
            <person name="Lucas S."/>
            <person name="Lapidus A."/>
            <person name="Barry K."/>
            <person name="Glavina del Rio T."/>
            <person name="Dalin E."/>
            <person name="Tice H."/>
            <person name="Pitluck S."/>
            <person name="Chain P."/>
            <person name="Malfatti S."/>
            <person name="Shin M."/>
            <person name="Vergez L."/>
            <person name="Schmutz J."/>
            <person name="Larimer F."/>
            <person name="Land M."/>
            <person name="Hauser L."/>
            <person name="Kyrpides N."/>
            <person name="Kim E."/>
            <person name="Tiedje J."/>
            <person name="Richardson P."/>
        </authorList>
    </citation>
    <scope>NUCLEOTIDE SEQUENCE [LARGE SCALE GENOMIC DNA]</scope>
    <source>
        <strain>ATCC 17616 / 249</strain>
    </source>
</reference>
<reference key="2">
    <citation type="submission" date="2007-04" db="EMBL/GenBank/DDBJ databases">
        <title>Complete genome sequence of Burkholderia multivorans ATCC 17616.</title>
        <authorList>
            <person name="Ohtsubo Y."/>
            <person name="Yamashita A."/>
            <person name="Kurokawa K."/>
            <person name="Takami H."/>
            <person name="Yuhara S."/>
            <person name="Nishiyama E."/>
            <person name="Endo R."/>
            <person name="Miyazaki R."/>
            <person name="Ono A."/>
            <person name="Yano K."/>
            <person name="Ito M."/>
            <person name="Sota M."/>
            <person name="Yuji N."/>
            <person name="Hattori M."/>
            <person name="Tsuda M."/>
        </authorList>
    </citation>
    <scope>NUCLEOTIDE SEQUENCE [LARGE SCALE GENOMIC DNA]</scope>
    <source>
        <strain>ATCC 17616 / 249</strain>
    </source>
</reference>
<proteinExistence type="inferred from homology"/>
<name>APT_BURM1</name>
<evidence type="ECO:0000255" key="1">
    <source>
        <dbReference type="HAMAP-Rule" id="MF_00004"/>
    </source>
</evidence>
<accession>A9AF06</accession>
<organism>
    <name type="scientific">Burkholderia multivorans (strain ATCC 17616 / 249)</name>
    <dbReference type="NCBI Taxonomy" id="395019"/>
    <lineage>
        <taxon>Bacteria</taxon>
        <taxon>Pseudomonadati</taxon>
        <taxon>Pseudomonadota</taxon>
        <taxon>Betaproteobacteria</taxon>
        <taxon>Burkholderiales</taxon>
        <taxon>Burkholderiaceae</taxon>
        <taxon>Burkholderia</taxon>
        <taxon>Burkholderia cepacia complex</taxon>
    </lineage>
</organism>
<protein>
    <recommendedName>
        <fullName evidence="1">Adenine phosphoribosyltransferase</fullName>
        <shortName evidence="1">APRT</shortName>
        <ecNumber evidence="1">2.4.2.7</ecNumber>
    </recommendedName>
</protein>
<gene>
    <name evidence="1" type="primary">apt</name>
    <name type="ordered locus">Bmul_0531</name>
    <name type="ordered locus">BMULJ_02728</name>
</gene>
<feature type="chain" id="PRO_1000088958" description="Adenine phosphoribosyltransferase">
    <location>
        <begin position="1"/>
        <end position="188"/>
    </location>
</feature>
<keyword id="KW-0963">Cytoplasm</keyword>
<keyword id="KW-0328">Glycosyltransferase</keyword>
<keyword id="KW-0660">Purine salvage</keyword>
<keyword id="KW-1185">Reference proteome</keyword>
<keyword id="KW-0808">Transferase</keyword>
<sequence length="188" mass="20339">MSHSSSGAPLDPVAFIHSQIRTVPDWPQPGVMFRDITTLLQSPKALRILVDLFVERYVDAKLDYVAGLDARGFIIAPIVAYELSVGFVPIRKVGKLPYKTRSESYELEYGSATVEIHEDACKPGDRVIIMDDLIATGGTMMAGRNLLERLGAVVVEGAAIIDLPDLGGSALLRNAGLPVYTVTEFAGH</sequence>
<comment type="function">
    <text evidence="1">Catalyzes a salvage reaction resulting in the formation of AMP, that is energically less costly than de novo synthesis.</text>
</comment>
<comment type="catalytic activity">
    <reaction evidence="1">
        <text>AMP + diphosphate = 5-phospho-alpha-D-ribose 1-diphosphate + adenine</text>
        <dbReference type="Rhea" id="RHEA:16609"/>
        <dbReference type="ChEBI" id="CHEBI:16708"/>
        <dbReference type="ChEBI" id="CHEBI:33019"/>
        <dbReference type="ChEBI" id="CHEBI:58017"/>
        <dbReference type="ChEBI" id="CHEBI:456215"/>
        <dbReference type="EC" id="2.4.2.7"/>
    </reaction>
</comment>
<comment type="pathway">
    <text evidence="1">Purine metabolism; AMP biosynthesis via salvage pathway; AMP from adenine: step 1/1.</text>
</comment>
<comment type="subunit">
    <text evidence="1">Homodimer.</text>
</comment>
<comment type="subcellular location">
    <subcellularLocation>
        <location evidence="1">Cytoplasm</location>
    </subcellularLocation>
</comment>
<comment type="similarity">
    <text evidence="1">Belongs to the purine/pyrimidine phosphoribosyltransferase family.</text>
</comment>